<evidence type="ECO:0000255" key="1">
    <source>
        <dbReference type="HAMAP-Rule" id="MF_00921"/>
    </source>
</evidence>
<keyword id="KW-0418">Kinase</keyword>
<keyword id="KW-0547">Nucleotide-binding</keyword>
<keyword id="KW-0723">Serine/threonine-protein kinase</keyword>
<keyword id="KW-0808">Transferase</keyword>
<protein>
    <recommendedName>
        <fullName evidence="1">Putative pyruvate, phosphate dikinase regulatory protein 1</fullName>
        <shortName evidence="1">PPDK regulatory protein 1</shortName>
        <ecNumber evidence="1">2.7.11.32</ecNumber>
        <ecNumber evidence="1">2.7.4.27</ecNumber>
    </recommendedName>
</protein>
<comment type="function">
    <text evidence="1">Bifunctional serine/threonine kinase and phosphorylase involved in the regulation of the pyruvate, phosphate dikinase (PPDK) by catalyzing its phosphorylation/dephosphorylation.</text>
</comment>
<comment type="catalytic activity">
    <reaction evidence="1">
        <text>N(tele)-phospho-L-histidyl/L-threonyl-[pyruvate, phosphate dikinase] + ADP = N(tele)-phospho-L-histidyl/O-phospho-L-threonyl-[pyruvate, phosphate dikinase] + AMP + H(+)</text>
        <dbReference type="Rhea" id="RHEA:43692"/>
        <dbReference type="Rhea" id="RHEA-COMP:10650"/>
        <dbReference type="Rhea" id="RHEA-COMP:10651"/>
        <dbReference type="ChEBI" id="CHEBI:15378"/>
        <dbReference type="ChEBI" id="CHEBI:30013"/>
        <dbReference type="ChEBI" id="CHEBI:61977"/>
        <dbReference type="ChEBI" id="CHEBI:83586"/>
        <dbReference type="ChEBI" id="CHEBI:456215"/>
        <dbReference type="ChEBI" id="CHEBI:456216"/>
        <dbReference type="EC" id="2.7.11.32"/>
    </reaction>
</comment>
<comment type="catalytic activity">
    <reaction evidence="1">
        <text>N(tele)-phospho-L-histidyl/O-phospho-L-threonyl-[pyruvate, phosphate dikinase] + phosphate + H(+) = N(tele)-phospho-L-histidyl/L-threonyl-[pyruvate, phosphate dikinase] + diphosphate</text>
        <dbReference type="Rhea" id="RHEA:43696"/>
        <dbReference type="Rhea" id="RHEA-COMP:10650"/>
        <dbReference type="Rhea" id="RHEA-COMP:10651"/>
        <dbReference type="ChEBI" id="CHEBI:15378"/>
        <dbReference type="ChEBI" id="CHEBI:30013"/>
        <dbReference type="ChEBI" id="CHEBI:33019"/>
        <dbReference type="ChEBI" id="CHEBI:43474"/>
        <dbReference type="ChEBI" id="CHEBI:61977"/>
        <dbReference type="ChEBI" id="CHEBI:83586"/>
        <dbReference type="EC" id="2.7.4.27"/>
    </reaction>
</comment>
<comment type="similarity">
    <text evidence="1">Belongs to the pyruvate, phosphate/water dikinase regulatory protein family. PDRP subfamily.</text>
</comment>
<accession>Q8CSD7</accession>
<dbReference type="EC" id="2.7.11.32" evidence="1"/>
<dbReference type="EC" id="2.7.4.27" evidence="1"/>
<dbReference type="EMBL" id="AE015929">
    <property type="protein sequence ID" value="AAO04849.1"/>
    <property type="molecule type" value="Genomic_DNA"/>
</dbReference>
<dbReference type="RefSeq" id="NP_764805.1">
    <property type="nucleotide sequence ID" value="NC_004461.1"/>
</dbReference>
<dbReference type="RefSeq" id="WP_001831146.1">
    <property type="nucleotide sequence ID" value="NZ_WBME01000008.1"/>
</dbReference>
<dbReference type="SMR" id="Q8CSD7"/>
<dbReference type="KEGG" id="sep:SE_1250"/>
<dbReference type="PATRIC" id="fig|176280.10.peg.1218"/>
<dbReference type="eggNOG" id="COG1806">
    <property type="taxonomic scope" value="Bacteria"/>
</dbReference>
<dbReference type="HOGENOM" id="CLU_046206_2_1_9"/>
<dbReference type="OrthoDB" id="9782201at2"/>
<dbReference type="Proteomes" id="UP000001411">
    <property type="component" value="Chromosome"/>
</dbReference>
<dbReference type="GO" id="GO:0043531">
    <property type="term" value="F:ADP binding"/>
    <property type="evidence" value="ECO:0007669"/>
    <property type="project" value="UniProtKB-UniRule"/>
</dbReference>
<dbReference type="GO" id="GO:0005524">
    <property type="term" value="F:ATP binding"/>
    <property type="evidence" value="ECO:0007669"/>
    <property type="project" value="InterPro"/>
</dbReference>
<dbReference type="GO" id="GO:0016776">
    <property type="term" value="F:phosphotransferase activity, phosphate group as acceptor"/>
    <property type="evidence" value="ECO:0007669"/>
    <property type="project" value="UniProtKB-UniRule"/>
</dbReference>
<dbReference type="GO" id="GO:0004674">
    <property type="term" value="F:protein serine/threonine kinase activity"/>
    <property type="evidence" value="ECO:0007669"/>
    <property type="project" value="UniProtKB-UniRule"/>
</dbReference>
<dbReference type="HAMAP" id="MF_00921">
    <property type="entry name" value="PDRP"/>
    <property type="match status" value="1"/>
</dbReference>
<dbReference type="InterPro" id="IPR005177">
    <property type="entry name" value="Kinase-pyrophosphorylase"/>
</dbReference>
<dbReference type="InterPro" id="IPR026565">
    <property type="entry name" value="PPDK_reg"/>
</dbReference>
<dbReference type="NCBIfam" id="NF003742">
    <property type="entry name" value="PRK05339.1"/>
    <property type="match status" value="1"/>
</dbReference>
<dbReference type="PANTHER" id="PTHR31756">
    <property type="entry name" value="PYRUVATE, PHOSPHATE DIKINASE REGULATORY PROTEIN 1, CHLOROPLASTIC"/>
    <property type="match status" value="1"/>
</dbReference>
<dbReference type="PANTHER" id="PTHR31756:SF3">
    <property type="entry name" value="PYRUVATE, PHOSPHATE DIKINASE REGULATORY PROTEIN 1, CHLOROPLASTIC"/>
    <property type="match status" value="1"/>
</dbReference>
<dbReference type="Pfam" id="PF03618">
    <property type="entry name" value="Kinase-PPPase"/>
    <property type="match status" value="1"/>
</dbReference>
<reference key="1">
    <citation type="journal article" date="2003" name="Mol. Microbiol.">
        <title>Genome-based analysis of virulence genes in a non-biofilm-forming Staphylococcus epidermidis strain (ATCC 12228).</title>
        <authorList>
            <person name="Zhang Y.-Q."/>
            <person name="Ren S.-X."/>
            <person name="Li H.-L."/>
            <person name="Wang Y.-X."/>
            <person name="Fu G."/>
            <person name="Yang J."/>
            <person name="Qin Z.-Q."/>
            <person name="Miao Y.-G."/>
            <person name="Wang W.-Y."/>
            <person name="Chen R.-S."/>
            <person name="Shen Y."/>
            <person name="Chen Z."/>
            <person name="Yuan Z.-H."/>
            <person name="Zhao G.-P."/>
            <person name="Qu D."/>
            <person name="Danchin A."/>
            <person name="Wen Y.-M."/>
        </authorList>
    </citation>
    <scope>NUCLEOTIDE SEQUENCE [LARGE SCALE GENOMIC DNA]</scope>
    <source>
        <strain>ATCC 12228 / FDA PCI 1200</strain>
    </source>
</reference>
<name>PDRP1_STAES</name>
<proteinExistence type="inferred from homology"/>
<organism>
    <name type="scientific">Staphylococcus epidermidis (strain ATCC 12228 / FDA PCI 1200)</name>
    <dbReference type="NCBI Taxonomy" id="176280"/>
    <lineage>
        <taxon>Bacteria</taxon>
        <taxon>Bacillati</taxon>
        <taxon>Bacillota</taxon>
        <taxon>Bacilli</taxon>
        <taxon>Bacillales</taxon>
        <taxon>Staphylococcaceae</taxon>
        <taxon>Staphylococcus</taxon>
    </lineage>
</organism>
<feature type="chain" id="PRO_0000196721" description="Putative pyruvate, phosphate dikinase regulatory protein 1">
    <location>
        <begin position="1"/>
        <end position="272"/>
    </location>
</feature>
<feature type="binding site" evidence="1">
    <location>
        <begin position="151"/>
        <end position="158"/>
    </location>
    <ligand>
        <name>ADP</name>
        <dbReference type="ChEBI" id="CHEBI:456216"/>
    </ligand>
</feature>
<sequence>MDNIKIIVASDSIGETAELVARAGVSQFNPKQCKHEFLRYPYIESFENVDEVIQVAKDTNAIIVYTLIKPEIKKYMISKVNEHALKSVDIMGPLMELLSNSIEETPYYEPGMVHRLDDAYFKKIDAIEFAVKYDDGKDPKGLPKADIVLLGISRTSKTPLSQYLAHKSYKVMNIPIVPEVTPPDGLFNVDPSKCIALKISEEKLNRIRKERLKQLGLGDKARYATEARIQEELDYFEKLVDKIGCPVIDVSDKAIEETANDIIHFIEQNKSK</sequence>
<gene>
    <name type="ordered locus">SE_1250</name>
</gene>